<evidence type="ECO:0000250" key="1"/>
<evidence type="ECO:0000255" key="2">
    <source>
        <dbReference type="PROSITE-ProRule" id="PRU00223"/>
    </source>
</evidence>
<evidence type="ECO:0000256" key="3">
    <source>
        <dbReference type="SAM" id="MobiDB-lite"/>
    </source>
</evidence>
<evidence type="ECO:0000305" key="4"/>
<reference key="1">
    <citation type="submission" date="2001-08" db="EMBL/GenBank/DDBJ databases">
        <title>Arabidopsis thaliana transcription factor WRKY31.</title>
        <authorList>
            <person name="Ulker B."/>
            <person name="Kushnir S."/>
            <person name="Somssich I.E."/>
        </authorList>
    </citation>
    <scope>NUCLEOTIDE SEQUENCE [MRNA]</scope>
    <source>
        <strain>cv. Columbia</strain>
        <tissue>Flower</tissue>
    </source>
</reference>
<reference key="2">
    <citation type="journal article" date="1999" name="Nature">
        <title>Sequence and analysis of chromosome 4 of the plant Arabidopsis thaliana.</title>
        <authorList>
            <person name="Mayer K.F.X."/>
            <person name="Schueller C."/>
            <person name="Wambutt R."/>
            <person name="Murphy G."/>
            <person name="Volckaert G."/>
            <person name="Pohl T."/>
            <person name="Duesterhoeft A."/>
            <person name="Stiekema W."/>
            <person name="Entian K.-D."/>
            <person name="Terryn N."/>
            <person name="Harris B."/>
            <person name="Ansorge W."/>
            <person name="Brandt P."/>
            <person name="Grivell L.A."/>
            <person name="Rieger M."/>
            <person name="Weichselgartner M."/>
            <person name="de Simone V."/>
            <person name="Obermaier B."/>
            <person name="Mache R."/>
            <person name="Mueller M."/>
            <person name="Kreis M."/>
            <person name="Delseny M."/>
            <person name="Puigdomenech P."/>
            <person name="Watson M."/>
            <person name="Schmidtheini T."/>
            <person name="Reichert B."/>
            <person name="Portetelle D."/>
            <person name="Perez-Alonso M."/>
            <person name="Boutry M."/>
            <person name="Bancroft I."/>
            <person name="Vos P."/>
            <person name="Hoheisel J."/>
            <person name="Zimmermann W."/>
            <person name="Wedler H."/>
            <person name="Ridley P."/>
            <person name="Langham S.-A."/>
            <person name="McCullagh B."/>
            <person name="Bilham L."/>
            <person name="Robben J."/>
            <person name="van der Schueren J."/>
            <person name="Grymonprez B."/>
            <person name="Chuang Y.-J."/>
            <person name="Vandenbussche F."/>
            <person name="Braeken M."/>
            <person name="Weltjens I."/>
            <person name="Voet M."/>
            <person name="Bastiaens I."/>
            <person name="Aert R."/>
            <person name="Defoor E."/>
            <person name="Weitzenegger T."/>
            <person name="Bothe G."/>
            <person name="Ramsperger U."/>
            <person name="Hilbert H."/>
            <person name="Braun M."/>
            <person name="Holzer E."/>
            <person name="Brandt A."/>
            <person name="Peters S."/>
            <person name="van Staveren M."/>
            <person name="Dirkse W."/>
            <person name="Mooijman P."/>
            <person name="Klein Lankhorst R."/>
            <person name="Rose M."/>
            <person name="Hauf J."/>
            <person name="Koetter P."/>
            <person name="Berneiser S."/>
            <person name="Hempel S."/>
            <person name="Feldpausch M."/>
            <person name="Lamberth S."/>
            <person name="Van den Daele H."/>
            <person name="De Keyser A."/>
            <person name="Buysshaert C."/>
            <person name="Gielen J."/>
            <person name="Villarroel R."/>
            <person name="De Clercq R."/>
            <person name="van Montagu M."/>
            <person name="Rogers J."/>
            <person name="Cronin A."/>
            <person name="Quail M.A."/>
            <person name="Bray-Allen S."/>
            <person name="Clark L."/>
            <person name="Doggett J."/>
            <person name="Hall S."/>
            <person name="Kay M."/>
            <person name="Lennard N."/>
            <person name="McLay K."/>
            <person name="Mayes R."/>
            <person name="Pettett A."/>
            <person name="Rajandream M.A."/>
            <person name="Lyne M."/>
            <person name="Benes V."/>
            <person name="Rechmann S."/>
            <person name="Borkova D."/>
            <person name="Bloecker H."/>
            <person name="Scharfe M."/>
            <person name="Grimm M."/>
            <person name="Loehnert T.-H."/>
            <person name="Dose S."/>
            <person name="de Haan M."/>
            <person name="Maarse A.C."/>
            <person name="Schaefer M."/>
            <person name="Mueller-Auer S."/>
            <person name="Gabel C."/>
            <person name="Fuchs M."/>
            <person name="Fartmann B."/>
            <person name="Granderath K."/>
            <person name="Dauner D."/>
            <person name="Herzl A."/>
            <person name="Neumann S."/>
            <person name="Argiriou A."/>
            <person name="Vitale D."/>
            <person name="Liguori R."/>
            <person name="Piravandi E."/>
            <person name="Massenet O."/>
            <person name="Quigley F."/>
            <person name="Clabauld G."/>
            <person name="Muendlein A."/>
            <person name="Felber R."/>
            <person name="Schnabl S."/>
            <person name="Hiller R."/>
            <person name="Schmidt W."/>
            <person name="Lecharny A."/>
            <person name="Aubourg S."/>
            <person name="Chefdor F."/>
            <person name="Cooke R."/>
            <person name="Berger C."/>
            <person name="Monfort A."/>
            <person name="Casacuberta E."/>
            <person name="Gibbons T."/>
            <person name="Weber N."/>
            <person name="Vandenbol M."/>
            <person name="Bargues M."/>
            <person name="Terol J."/>
            <person name="Torres A."/>
            <person name="Perez-Perez A."/>
            <person name="Purnelle B."/>
            <person name="Bent E."/>
            <person name="Johnson S."/>
            <person name="Tacon D."/>
            <person name="Jesse T."/>
            <person name="Heijnen L."/>
            <person name="Schwarz S."/>
            <person name="Scholler P."/>
            <person name="Heber S."/>
            <person name="Francs P."/>
            <person name="Bielke C."/>
            <person name="Frishman D."/>
            <person name="Haase D."/>
            <person name="Lemcke K."/>
            <person name="Mewes H.-W."/>
            <person name="Stocker S."/>
            <person name="Zaccaria P."/>
            <person name="Bevan M."/>
            <person name="Wilson R.K."/>
            <person name="de la Bastide M."/>
            <person name="Habermann K."/>
            <person name="Parnell L."/>
            <person name="Dedhia N."/>
            <person name="Gnoj L."/>
            <person name="Schutz K."/>
            <person name="Huang E."/>
            <person name="Spiegel L."/>
            <person name="Sekhon M."/>
            <person name="Murray J."/>
            <person name="Sheet P."/>
            <person name="Cordes M."/>
            <person name="Abu-Threideh J."/>
            <person name="Stoneking T."/>
            <person name="Kalicki J."/>
            <person name="Graves T."/>
            <person name="Harmon G."/>
            <person name="Edwards J."/>
            <person name="Latreille P."/>
            <person name="Courtney L."/>
            <person name="Cloud J."/>
            <person name="Abbott A."/>
            <person name="Scott K."/>
            <person name="Johnson D."/>
            <person name="Minx P."/>
            <person name="Bentley D."/>
            <person name="Fulton B."/>
            <person name="Miller N."/>
            <person name="Greco T."/>
            <person name="Kemp K."/>
            <person name="Kramer J."/>
            <person name="Fulton L."/>
            <person name="Mardis E."/>
            <person name="Dante M."/>
            <person name="Pepin K."/>
            <person name="Hillier L.W."/>
            <person name="Nelson J."/>
            <person name="Spieth J."/>
            <person name="Ryan E."/>
            <person name="Andrews S."/>
            <person name="Geisel C."/>
            <person name="Layman D."/>
            <person name="Du H."/>
            <person name="Ali J."/>
            <person name="Berghoff A."/>
            <person name="Jones K."/>
            <person name="Drone K."/>
            <person name="Cotton M."/>
            <person name="Joshu C."/>
            <person name="Antonoiu B."/>
            <person name="Zidanic M."/>
            <person name="Strong C."/>
            <person name="Sun H."/>
            <person name="Lamar B."/>
            <person name="Yordan C."/>
            <person name="Ma P."/>
            <person name="Zhong J."/>
            <person name="Preston R."/>
            <person name="Vil D."/>
            <person name="Shekher M."/>
            <person name="Matero A."/>
            <person name="Shah R."/>
            <person name="Swaby I.K."/>
            <person name="O'Shaughnessy A."/>
            <person name="Rodriguez M."/>
            <person name="Hoffman J."/>
            <person name="Till S."/>
            <person name="Granat S."/>
            <person name="Shohdy N."/>
            <person name="Hasegawa A."/>
            <person name="Hameed A."/>
            <person name="Lodhi M."/>
            <person name="Johnson A."/>
            <person name="Chen E."/>
            <person name="Marra M.A."/>
            <person name="Martienssen R."/>
            <person name="McCombie W.R."/>
        </authorList>
    </citation>
    <scope>NUCLEOTIDE SEQUENCE [LARGE SCALE GENOMIC DNA]</scope>
    <source>
        <strain>cv. Columbia</strain>
    </source>
</reference>
<reference key="3">
    <citation type="journal article" date="2017" name="Plant J.">
        <title>Araport11: a complete reannotation of the Arabidopsis thaliana reference genome.</title>
        <authorList>
            <person name="Cheng C.Y."/>
            <person name="Krishnakumar V."/>
            <person name="Chan A.P."/>
            <person name="Thibaud-Nissen F."/>
            <person name="Schobel S."/>
            <person name="Town C.D."/>
        </authorList>
    </citation>
    <scope>GENOME REANNOTATION</scope>
    <source>
        <strain>cv. Columbia</strain>
    </source>
</reference>
<proteinExistence type="evidence at protein level"/>
<name>WRK31_ARATH</name>
<keyword id="KW-0238">DNA-binding</keyword>
<keyword id="KW-0539">Nucleus</keyword>
<keyword id="KW-1185">Reference proteome</keyword>
<keyword id="KW-0804">Transcription</keyword>
<keyword id="KW-0805">Transcription regulation</keyword>
<organism>
    <name type="scientific">Arabidopsis thaliana</name>
    <name type="common">Mouse-ear cress</name>
    <dbReference type="NCBI Taxonomy" id="3702"/>
    <lineage>
        <taxon>Eukaryota</taxon>
        <taxon>Viridiplantae</taxon>
        <taxon>Streptophyta</taxon>
        <taxon>Embryophyta</taxon>
        <taxon>Tracheophyta</taxon>
        <taxon>Spermatophyta</taxon>
        <taxon>Magnoliopsida</taxon>
        <taxon>eudicotyledons</taxon>
        <taxon>Gunneridae</taxon>
        <taxon>Pentapetalae</taxon>
        <taxon>rosids</taxon>
        <taxon>malvids</taxon>
        <taxon>Brassicales</taxon>
        <taxon>Brassicaceae</taxon>
        <taxon>Camelineae</taxon>
        <taxon>Arabidopsis</taxon>
    </lineage>
</organism>
<comment type="function">
    <text evidence="1">Transcription factor. Interacts specifically with the W box (5'-(T)TGAC[CT]-3'), a frequently occurring elicitor-responsive cis-acting element (By similarity).</text>
</comment>
<comment type="interaction">
    <interactant intactId="EBI-15208488">
        <id>Q93WT0</id>
    </interactant>
    <interactant intactId="EBI-2349513">
        <id>Q84MC7</id>
        <label>PYL9</label>
    </interactant>
    <organismsDiffer>false</organismsDiffer>
    <experiments>3</experiments>
</comment>
<comment type="subcellular location">
    <subcellularLocation>
        <location evidence="2">Nucleus</location>
    </subcellularLocation>
</comment>
<comment type="sequence caution" evidence="4">
    <conflict type="erroneous gene model prediction">
        <sequence resource="EMBL-CDS" id="CAA18110"/>
    </conflict>
</comment>
<comment type="sequence caution" evidence="4">
    <conflict type="erroneous gene model prediction">
        <sequence resource="EMBL-CDS" id="CAB79162"/>
    </conflict>
</comment>
<gene>
    <name type="primary">WRKY31</name>
    <name type="ordered locus">At4g22070</name>
    <name type="ORF">F1N20.170</name>
</gene>
<sequence>MFRFPVSLGGSRDEDRHDQITPLDDHRVVVDEVDFFSEKRDRVSRENINDDDDEGNKVLIKMEGSRVEENDRSRDVNIGLNLLTANTGSDESTVDDGLSMDMEDKRAKIENAQLQEELKKMKIENQRLRDMLSQATTNFNALQMQLVAVMRQQEQRNSSQDHLLAQESKAEGRKRQELQIMVPRQFMDLGPSSGAAEHGAEVSSEERTTVRSGSPPSLLESSNPRENGKRLLGREESSEESESNAWGNPNKVPKHNPSSSNSNGNRNGNVIDQSAAEATMRKARVSVRARSEAAMISDGCQWRKYGQKMAKGNPCPRAYYRCTMAGGCPVRKQVQRCAEDRSILITTYEGNHNHPLPPAATAMASTTTAAASMLLSGSMSSQDGLMNPTNLLARAILPCSSSMATISASAPFPTITLDLTNSPNGNNPNMTTNNPLMQFAQRPGFNPAVLPQVVGQAMYNNQQQSKFSGLQLPAQPLQIAATSSVAESVSAASAAIASDPNFAAALAAAITSIMNGSSHQNNNTNNNNVATSNNDSRQ</sequence>
<accession>Q93WT0</accession>
<accession>O65455</accession>
<feature type="chain" id="PRO_0000133673" description="Probable WRKY transcription factor 31">
    <location>
        <begin position="1"/>
        <end position="538"/>
    </location>
</feature>
<feature type="DNA-binding region" description="WRKY" evidence="2">
    <location>
        <begin position="291"/>
        <end position="357"/>
    </location>
</feature>
<feature type="region of interest" description="Disordered" evidence="3">
    <location>
        <begin position="153"/>
        <end position="277"/>
    </location>
</feature>
<feature type="region of interest" description="Disordered" evidence="3">
    <location>
        <begin position="517"/>
        <end position="538"/>
    </location>
</feature>
<feature type="compositionally biased region" description="Basic and acidic residues" evidence="3">
    <location>
        <begin position="168"/>
        <end position="177"/>
    </location>
</feature>
<feature type="compositionally biased region" description="Basic and acidic residues" evidence="3">
    <location>
        <begin position="198"/>
        <end position="209"/>
    </location>
</feature>
<feature type="compositionally biased region" description="Polar residues" evidence="3">
    <location>
        <begin position="210"/>
        <end position="225"/>
    </location>
</feature>
<feature type="compositionally biased region" description="Basic and acidic residues" evidence="3">
    <location>
        <begin position="226"/>
        <end position="236"/>
    </location>
</feature>
<feature type="compositionally biased region" description="Low complexity" evidence="3">
    <location>
        <begin position="248"/>
        <end position="270"/>
    </location>
</feature>
<dbReference type="EMBL" id="AY052648">
    <property type="protein sequence ID" value="AAL11009.1"/>
    <property type="molecule type" value="mRNA"/>
</dbReference>
<dbReference type="EMBL" id="AL022140">
    <property type="protein sequence ID" value="CAA18110.1"/>
    <property type="status" value="ALT_SEQ"/>
    <property type="molecule type" value="Genomic_DNA"/>
</dbReference>
<dbReference type="EMBL" id="AL161556">
    <property type="protein sequence ID" value="CAB79162.1"/>
    <property type="status" value="ALT_SEQ"/>
    <property type="molecule type" value="Genomic_DNA"/>
</dbReference>
<dbReference type="EMBL" id="CP002687">
    <property type="protein sequence ID" value="AEE84546.1"/>
    <property type="molecule type" value="Genomic_DNA"/>
</dbReference>
<dbReference type="EMBL" id="CP002687">
    <property type="protein sequence ID" value="ANM67025.1"/>
    <property type="molecule type" value="Genomic_DNA"/>
</dbReference>
<dbReference type="EMBL" id="CP002687">
    <property type="protein sequence ID" value="ANM67026.1"/>
    <property type="molecule type" value="Genomic_DNA"/>
</dbReference>
<dbReference type="EMBL" id="CP002687">
    <property type="protein sequence ID" value="ANM67027.1"/>
    <property type="molecule type" value="Genomic_DNA"/>
</dbReference>
<dbReference type="RefSeq" id="NP_001328880.1">
    <property type="nucleotide sequence ID" value="NM_001341526.1"/>
</dbReference>
<dbReference type="RefSeq" id="NP_001328881.1">
    <property type="nucleotide sequence ID" value="NM_001341527.1"/>
</dbReference>
<dbReference type="RefSeq" id="NP_001328882.1">
    <property type="nucleotide sequence ID" value="NM_001341528.1"/>
</dbReference>
<dbReference type="RefSeq" id="NP_567644.1">
    <property type="nucleotide sequence ID" value="NM_118328.4"/>
</dbReference>
<dbReference type="SMR" id="Q93WT0"/>
<dbReference type="BioGRID" id="13585">
    <property type="interactions" value="7"/>
</dbReference>
<dbReference type="IntAct" id="Q93WT0">
    <property type="interactions" value="6"/>
</dbReference>
<dbReference type="STRING" id="3702.Q93WT0"/>
<dbReference type="iPTMnet" id="Q93WT0"/>
<dbReference type="PaxDb" id="3702-AT4G22070.1"/>
<dbReference type="ProteomicsDB" id="246476"/>
<dbReference type="EnsemblPlants" id="AT4G22070.1">
    <property type="protein sequence ID" value="AT4G22070.1"/>
    <property type="gene ID" value="AT4G22070"/>
</dbReference>
<dbReference type="EnsemblPlants" id="AT4G22070.2">
    <property type="protein sequence ID" value="AT4G22070.2"/>
    <property type="gene ID" value="AT4G22070"/>
</dbReference>
<dbReference type="EnsemblPlants" id="AT4G22070.3">
    <property type="protein sequence ID" value="AT4G22070.3"/>
    <property type="gene ID" value="AT4G22070"/>
</dbReference>
<dbReference type="EnsemblPlants" id="AT4G22070.4">
    <property type="protein sequence ID" value="AT4G22070.4"/>
    <property type="gene ID" value="AT4G22070"/>
</dbReference>
<dbReference type="GeneID" id="828296"/>
<dbReference type="Gramene" id="AT4G22070.1">
    <property type="protein sequence ID" value="AT4G22070.1"/>
    <property type="gene ID" value="AT4G22070"/>
</dbReference>
<dbReference type="Gramene" id="AT4G22070.2">
    <property type="protein sequence ID" value="AT4G22070.2"/>
    <property type="gene ID" value="AT4G22070"/>
</dbReference>
<dbReference type="Gramene" id="AT4G22070.3">
    <property type="protein sequence ID" value="AT4G22070.3"/>
    <property type="gene ID" value="AT4G22070"/>
</dbReference>
<dbReference type="Gramene" id="AT4G22070.4">
    <property type="protein sequence ID" value="AT4G22070.4"/>
    <property type="gene ID" value="AT4G22070"/>
</dbReference>
<dbReference type="KEGG" id="ath:AT4G22070"/>
<dbReference type="Araport" id="AT4G22070"/>
<dbReference type="TAIR" id="AT4G22070">
    <property type="gene designation" value="WRKY31"/>
</dbReference>
<dbReference type="eggNOG" id="ENOG502QSY8">
    <property type="taxonomic scope" value="Eukaryota"/>
</dbReference>
<dbReference type="HOGENOM" id="CLU_021824_3_1_1"/>
<dbReference type="InParanoid" id="Q93WT0"/>
<dbReference type="OMA" id="ESFHADC"/>
<dbReference type="PhylomeDB" id="Q93WT0"/>
<dbReference type="PRO" id="PR:Q93WT0"/>
<dbReference type="Proteomes" id="UP000006548">
    <property type="component" value="Chromosome 4"/>
</dbReference>
<dbReference type="ExpressionAtlas" id="Q93WT0">
    <property type="expression patterns" value="baseline and differential"/>
</dbReference>
<dbReference type="GO" id="GO:0005634">
    <property type="term" value="C:nucleus"/>
    <property type="evidence" value="ECO:0007669"/>
    <property type="project" value="UniProtKB-SubCell"/>
</dbReference>
<dbReference type="GO" id="GO:0003700">
    <property type="term" value="F:DNA-binding transcription factor activity"/>
    <property type="evidence" value="ECO:0000250"/>
    <property type="project" value="TAIR"/>
</dbReference>
<dbReference type="GO" id="GO:0043565">
    <property type="term" value="F:sequence-specific DNA binding"/>
    <property type="evidence" value="ECO:0007669"/>
    <property type="project" value="InterPro"/>
</dbReference>
<dbReference type="FunFam" id="2.20.25.80:FF:000002">
    <property type="entry name" value="probable WRKY transcription factor 31"/>
    <property type="match status" value="1"/>
</dbReference>
<dbReference type="Gene3D" id="2.20.25.80">
    <property type="entry name" value="WRKY domain"/>
    <property type="match status" value="1"/>
</dbReference>
<dbReference type="InterPro" id="IPR003657">
    <property type="entry name" value="WRKY_dom"/>
</dbReference>
<dbReference type="InterPro" id="IPR036576">
    <property type="entry name" value="WRKY_dom_sf"/>
</dbReference>
<dbReference type="InterPro" id="IPR044810">
    <property type="entry name" value="WRKY_plant"/>
</dbReference>
<dbReference type="PANTHER" id="PTHR31429:SF106">
    <property type="entry name" value="WRKY TRANSCRIPTION FACTOR 31-RELATED"/>
    <property type="match status" value="1"/>
</dbReference>
<dbReference type="PANTHER" id="PTHR31429">
    <property type="entry name" value="WRKY TRANSCRIPTION FACTOR 36-RELATED"/>
    <property type="match status" value="1"/>
</dbReference>
<dbReference type="Pfam" id="PF03106">
    <property type="entry name" value="WRKY"/>
    <property type="match status" value="1"/>
</dbReference>
<dbReference type="SMART" id="SM00774">
    <property type="entry name" value="WRKY"/>
    <property type="match status" value="1"/>
</dbReference>
<dbReference type="SUPFAM" id="SSF118290">
    <property type="entry name" value="WRKY DNA-binding domain"/>
    <property type="match status" value="1"/>
</dbReference>
<dbReference type="PROSITE" id="PS50811">
    <property type="entry name" value="WRKY"/>
    <property type="match status" value="1"/>
</dbReference>
<protein>
    <recommendedName>
        <fullName>Probable WRKY transcription factor 31</fullName>
    </recommendedName>
    <alternativeName>
        <fullName>WRKY DNA-binding protein 31</fullName>
    </alternativeName>
</protein>